<protein>
    <recommendedName>
        <fullName>Fibroblast growth factor receptor</fullName>
        <shortName>SpFGFR</shortName>
        <ecNumber>2.7.10.1</ecNumber>
    </recommendedName>
</protein>
<reference key="1">
    <citation type="journal article" date="1996" name="J. Biol. Chem.">
        <title>SpFGFR, a new member of the fibroblast growth factor receptor family, is developmentally regulated during early sea urchin development.</title>
        <authorList>
            <person name="McCoon P.E."/>
            <person name="Angerer R.C."/>
            <person name="Angerer L.M."/>
        </authorList>
    </citation>
    <scope>NUCLEOTIDE SEQUENCE [MRNA] (ISOFORMS 1 AND 2)</scope>
</reference>
<comment type="function">
    <text>Receptor for basic fibroblast growth factor.</text>
</comment>
<comment type="catalytic activity">
    <reaction evidence="6">
        <text>L-tyrosyl-[protein] + ATP = O-phospho-L-tyrosyl-[protein] + ADP + H(+)</text>
        <dbReference type="Rhea" id="RHEA:10596"/>
        <dbReference type="Rhea" id="RHEA-COMP:10136"/>
        <dbReference type="Rhea" id="RHEA-COMP:20101"/>
        <dbReference type="ChEBI" id="CHEBI:15378"/>
        <dbReference type="ChEBI" id="CHEBI:30616"/>
        <dbReference type="ChEBI" id="CHEBI:46858"/>
        <dbReference type="ChEBI" id="CHEBI:61978"/>
        <dbReference type="ChEBI" id="CHEBI:456216"/>
        <dbReference type="EC" id="2.7.10.1"/>
    </reaction>
</comment>
<comment type="subcellular location">
    <subcellularLocation>
        <location evidence="8">Membrane</location>
        <topology evidence="8">Single-pass membrane protein</topology>
    </subcellularLocation>
</comment>
<comment type="alternative products">
    <event type="alternative splicing"/>
    <isoform>
        <id>Q26614-1</id>
        <name>1</name>
        <name>Ig3L</name>
        <sequence type="displayed"/>
    </isoform>
    <isoform>
        <id>Q26614-2</id>
        <name>2</name>
        <name>Ig3S</name>
        <sequence type="described" ref="VSP_020370"/>
    </isoform>
</comment>
<comment type="developmental stage">
    <text>Transcripts accumulate when morphogenesis begins with mesenchyme cell ingression and gastrulation. Accumulation in all cell types of the embryo, although hybridization shows that they are somewhat enriched in cells of oral ectoderm and endoderm. Isoform 2 transcript is enriched in endomesoderm.</text>
</comment>
<comment type="similarity">
    <text evidence="4">Belongs to the protein kinase superfamily. Tyr protein kinase family. Fibroblast growth factor receptor subfamily.</text>
</comment>
<gene>
    <name type="primary">FGFR</name>
</gene>
<name>FGFR_STRPU</name>
<feature type="signal peptide" evidence="2">
    <location>
        <begin position="1"/>
        <end position="43"/>
    </location>
</feature>
<feature type="chain" id="PRO_0000249214" description="Fibroblast growth factor receptor">
    <location>
        <begin position="44"/>
        <end position="972"/>
    </location>
</feature>
<feature type="topological domain" description="Extracellular" evidence="2">
    <location>
        <begin position="44"/>
        <end position="547"/>
    </location>
</feature>
<feature type="transmembrane region" description="Helical" evidence="2">
    <location>
        <begin position="548"/>
        <end position="568"/>
    </location>
</feature>
<feature type="topological domain" description="Cytoplasmic" evidence="2">
    <location>
        <begin position="569"/>
        <end position="972"/>
    </location>
</feature>
<feature type="domain" description="Fibronectin type-III" evidence="5">
    <location>
        <begin position="57"/>
        <end position="152"/>
    </location>
</feature>
<feature type="domain" description="Ig-like C2-type 1">
    <location>
        <begin position="150"/>
        <end position="242"/>
    </location>
</feature>
<feature type="domain" description="Ig-like C2-type 2">
    <location>
        <begin position="282"/>
        <end position="374"/>
    </location>
</feature>
<feature type="domain" description="Ig-like C2-type 3">
    <location>
        <begin position="383"/>
        <end position="517"/>
    </location>
</feature>
<feature type="domain" description="Protein kinase" evidence="4">
    <location>
        <begin position="639"/>
        <end position="925"/>
    </location>
</feature>
<feature type="active site" description="Proton acceptor" evidence="4 6">
    <location>
        <position position="781"/>
    </location>
</feature>
<feature type="binding site" evidence="4">
    <location>
        <begin position="645"/>
        <end position="653"/>
    </location>
    <ligand>
        <name>ATP</name>
        <dbReference type="ChEBI" id="CHEBI:30616"/>
    </ligand>
</feature>
<feature type="binding site" evidence="4">
    <location>
        <position position="673"/>
    </location>
    <ligand>
        <name>ATP</name>
        <dbReference type="ChEBI" id="CHEBI:30616"/>
    </ligand>
</feature>
<feature type="modified residue" description="Phosphotyrosine; by autocatalysis" evidence="1">
    <location>
        <position position="812"/>
    </location>
</feature>
<feature type="glycosylation site" description="N-linked (GlcNAc...) asparagine" evidence="2">
    <location>
        <position position="109"/>
    </location>
</feature>
<feature type="glycosylation site" description="N-linked (GlcNAc...) asparagine" evidence="2">
    <location>
        <position position="121"/>
    </location>
</feature>
<feature type="glycosylation site" description="N-linked (GlcNAc...) asparagine" evidence="2">
    <location>
        <position position="191"/>
    </location>
</feature>
<feature type="glycosylation site" description="N-linked (GlcNAc...) asparagine" evidence="2">
    <location>
        <position position="203"/>
    </location>
</feature>
<feature type="glycosylation site" description="N-linked (GlcNAc...) asparagine" evidence="2">
    <location>
        <position position="239"/>
    </location>
</feature>
<feature type="glycosylation site" description="N-linked (GlcNAc...) asparagine" evidence="2">
    <location>
        <position position="272"/>
    </location>
</feature>
<feature type="glycosylation site" description="N-linked (GlcNAc...) asparagine" evidence="2">
    <location>
        <position position="315"/>
    </location>
</feature>
<feature type="glycosylation site" description="N-linked (GlcNAc...) asparagine" evidence="2">
    <location>
        <position position="390"/>
    </location>
</feature>
<feature type="glycosylation site" description="N-linked (GlcNAc...) asparagine" evidence="2">
    <location>
        <position position="398"/>
    </location>
</feature>
<feature type="glycosylation site" description="N-linked (GlcNAc...) asparagine" evidence="2">
    <location>
        <position position="419"/>
    </location>
</feature>
<feature type="glycosylation site" description="N-linked (GlcNAc...) asparagine" evidence="2">
    <location>
        <position position="422"/>
    </location>
</feature>
<feature type="glycosylation site" description="N-linked (GlcNAc...) asparagine" evidence="2">
    <location>
        <position position="460"/>
    </location>
</feature>
<feature type="disulfide bond" evidence="3">
    <location>
        <begin position="176"/>
        <end position="226"/>
    </location>
</feature>
<feature type="disulfide bond" evidence="3">
    <location>
        <begin position="306"/>
        <end position="358"/>
    </location>
</feature>
<feature type="disulfide bond" evidence="3">
    <location>
        <begin position="403"/>
        <end position="501"/>
    </location>
</feature>
<feature type="splice variant" id="VSP_020370" description="In isoform 2." evidence="7">
    <location>
        <begin position="439"/>
        <end position="472"/>
    </location>
</feature>
<evidence type="ECO:0000250" key="1"/>
<evidence type="ECO:0000255" key="2"/>
<evidence type="ECO:0000255" key="3">
    <source>
        <dbReference type="PROSITE-ProRule" id="PRU00114"/>
    </source>
</evidence>
<evidence type="ECO:0000255" key="4">
    <source>
        <dbReference type="PROSITE-ProRule" id="PRU00159"/>
    </source>
</evidence>
<evidence type="ECO:0000255" key="5">
    <source>
        <dbReference type="PROSITE-ProRule" id="PRU00316"/>
    </source>
</evidence>
<evidence type="ECO:0000255" key="6">
    <source>
        <dbReference type="PROSITE-ProRule" id="PRU10028"/>
    </source>
</evidence>
<evidence type="ECO:0000303" key="7">
    <source>
    </source>
</evidence>
<evidence type="ECO:0000305" key="8"/>
<organism>
    <name type="scientific">Strongylocentrotus purpuratus</name>
    <name type="common">Purple sea urchin</name>
    <dbReference type="NCBI Taxonomy" id="7668"/>
    <lineage>
        <taxon>Eukaryota</taxon>
        <taxon>Metazoa</taxon>
        <taxon>Echinodermata</taxon>
        <taxon>Eleutherozoa</taxon>
        <taxon>Echinozoa</taxon>
        <taxon>Echinoidea</taxon>
        <taxon>Euechinoidea</taxon>
        <taxon>Echinacea</taxon>
        <taxon>Camarodonta</taxon>
        <taxon>Echinidea</taxon>
        <taxon>Strongylocentrotidae</taxon>
        <taxon>Strongylocentrotus</taxon>
    </lineage>
</organism>
<keyword id="KW-0025">Alternative splicing</keyword>
<keyword id="KW-0067">ATP-binding</keyword>
<keyword id="KW-1015">Disulfide bond</keyword>
<keyword id="KW-0325">Glycoprotein</keyword>
<keyword id="KW-0393">Immunoglobulin domain</keyword>
<keyword id="KW-0418">Kinase</keyword>
<keyword id="KW-0472">Membrane</keyword>
<keyword id="KW-0547">Nucleotide-binding</keyword>
<keyword id="KW-0597">Phosphoprotein</keyword>
<keyword id="KW-0675">Receptor</keyword>
<keyword id="KW-1185">Reference proteome</keyword>
<keyword id="KW-0677">Repeat</keyword>
<keyword id="KW-0732">Signal</keyword>
<keyword id="KW-0808">Transferase</keyword>
<keyword id="KW-0812">Transmembrane</keyword>
<keyword id="KW-1133">Transmembrane helix</keyword>
<keyword id="KW-0829">Tyrosine-protein kinase</keyword>
<proteinExistence type="evidence at transcript level"/>
<accession>Q26614</accession>
<sequence length="972" mass="110482">MSLPRCPRTRTVMFSRTLTRCYPQRTLWIAILCVICSWTLSTAGATTIRDKEVKPDAPQDLTAIPVKAEAIVLTWKKPLKGQTDGYIVVYCLKRNKGNGCERQKIEGGNVTEVEVTNLYANHTYQFQVQSWYSDHPKGASTGYIEASGTPPIPPTLRRNFKGLVEKSLGFEHKIPCPVKADPRPYTRWLKNGTDLTPNDPDDNVSFTKTSIVFKRLRFSDAGLYTCVASNFFGQPIHVNFTLIVVDTHSESYAESSVLESFSSLELETGPYNETEEEETHFPRFTDTERMEPEKPLPSNTKVRLECGARGTPTPNITWIKDGVQKWKINVIRPTRVEEKGFVLIIRRAIVRDTGKYTCIVSNQYGTIEHTYDVKIRERLPVKPIMSPMKNVTATVGSNTSFVCRVVNDLTPHFAWMRFNGTNNTKQRLTDIDDHISILQQRWVEEPMLTCDEFLDVFYQNQSKRMLECLHLIQLETQGGMEEANQLKLYNVQYEDEGPYLCVAGNFYGMSWEGAYLDVVEPTTQAPVRTNPPAVYIPNNMQPTSKTQLIIFSVVGFVVVLILVTCIAILCKQTQVRHRRPSDKPDISGPKHLYRQTSVDSTQSIAPLFGGRNRLTSSLTVISEYDIPLDPEWEFPRDRLTVGKTIGEGAFGKVVIGEAVGIVCQEKTSTVAVKMLKANAMDREFSDLISELAMMKMIGKNPNIINLLGCCTQEGPPYVIVEFAHHGNLRDFLRSRRPPEEYEKSILLTTSQTLTNKDLMSMAYQVARGMDFLASKKCIHRDLAARNVLVTEDFEMKICDFGLARDIHYIDFYRKTTDGRLPVKWMAPEALFDRMFTTQSDVWSFGILLWEIMTLGGTPYPSVPVEQMFDYLRSGKRLEKPQNTSLEIYHILCECWRTSPGQRPTFCELVEDLDRIISVSSNQDYLDLEAVGDAPVKTFQESERMAFMGFRAPLSPQVYYKVPQTRDCCPYAN</sequence>
<dbReference type="EC" id="2.7.10.1"/>
<dbReference type="EMBL" id="U17164">
    <property type="protein sequence ID" value="AAC47258.1"/>
    <property type="molecule type" value="mRNA"/>
</dbReference>
<dbReference type="RefSeq" id="NP_999702.1">
    <molecule id="Q26614-1"/>
    <property type="nucleotide sequence ID" value="NM_214537.1"/>
</dbReference>
<dbReference type="SMR" id="Q26614"/>
<dbReference type="FunCoup" id="Q26614">
    <property type="interactions" value="1315"/>
</dbReference>
<dbReference type="STRING" id="7668.Q26614"/>
<dbReference type="GlyCosmos" id="Q26614">
    <property type="glycosylation" value="12 sites, No reported glycans"/>
</dbReference>
<dbReference type="EnsemblMetazoa" id="NM_214537">
    <molecule id="Q26614-1"/>
    <property type="protein sequence ID" value="NP_999702"/>
    <property type="gene ID" value="GeneID_373310"/>
</dbReference>
<dbReference type="GeneID" id="373310"/>
<dbReference type="KEGG" id="spu:373310"/>
<dbReference type="CTD" id="373310"/>
<dbReference type="eggNOG" id="KOG0200">
    <property type="taxonomic scope" value="Eukaryota"/>
</dbReference>
<dbReference type="HOGENOM" id="CLU_000288_74_2_1"/>
<dbReference type="InParanoid" id="Q26614"/>
<dbReference type="OrthoDB" id="5984265at2759"/>
<dbReference type="PhylomeDB" id="Q26614"/>
<dbReference type="Proteomes" id="UP000007110">
    <property type="component" value="Unassembled WGS sequence"/>
</dbReference>
<dbReference type="GO" id="GO:0005886">
    <property type="term" value="C:plasma membrane"/>
    <property type="evidence" value="ECO:0000318"/>
    <property type="project" value="GO_Central"/>
</dbReference>
<dbReference type="GO" id="GO:0043235">
    <property type="term" value="C:receptor complex"/>
    <property type="evidence" value="ECO:0000318"/>
    <property type="project" value="GO_Central"/>
</dbReference>
<dbReference type="GO" id="GO:0005524">
    <property type="term" value="F:ATP binding"/>
    <property type="evidence" value="ECO:0007669"/>
    <property type="project" value="UniProtKB-KW"/>
</dbReference>
<dbReference type="GO" id="GO:0017134">
    <property type="term" value="F:fibroblast growth factor binding"/>
    <property type="evidence" value="ECO:0000318"/>
    <property type="project" value="GO_Central"/>
</dbReference>
<dbReference type="GO" id="GO:0005007">
    <property type="term" value="F:fibroblast growth factor receptor activity"/>
    <property type="evidence" value="ECO:0000318"/>
    <property type="project" value="GO_Central"/>
</dbReference>
<dbReference type="GO" id="GO:0008543">
    <property type="term" value="P:fibroblast growth factor receptor signaling pathway"/>
    <property type="evidence" value="ECO:0000318"/>
    <property type="project" value="GO_Central"/>
</dbReference>
<dbReference type="GO" id="GO:0008284">
    <property type="term" value="P:positive regulation of cell population proliferation"/>
    <property type="evidence" value="ECO:0000318"/>
    <property type="project" value="GO_Central"/>
</dbReference>
<dbReference type="GO" id="GO:0043410">
    <property type="term" value="P:positive regulation of MAPK cascade"/>
    <property type="evidence" value="ECO:0000318"/>
    <property type="project" value="GO_Central"/>
</dbReference>
<dbReference type="CDD" id="cd00063">
    <property type="entry name" value="FN3"/>
    <property type="match status" value="1"/>
</dbReference>
<dbReference type="CDD" id="cd00096">
    <property type="entry name" value="Ig"/>
    <property type="match status" value="1"/>
</dbReference>
<dbReference type="CDD" id="cd05729">
    <property type="entry name" value="IgI_2_FGFR_like"/>
    <property type="match status" value="1"/>
</dbReference>
<dbReference type="CDD" id="cd05053">
    <property type="entry name" value="PTKc_FGFR"/>
    <property type="match status" value="1"/>
</dbReference>
<dbReference type="FunFam" id="1.10.510.10:FF:000007">
    <property type="entry name" value="Fibroblast growth factor receptor"/>
    <property type="match status" value="1"/>
</dbReference>
<dbReference type="FunFam" id="2.60.40.10:FF:000016">
    <property type="entry name" value="Fibroblast growth factor receptor"/>
    <property type="match status" value="1"/>
</dbReference>
<dbReference type="FunFam" id="2.60.40.10:FF:002521">
    <property type="entry name" value="Fibroblast growth factor receptor"/>
    <property type="match status" value="1"/>
</dbReference>
<dbReference type="FunFam" id="3.30.200.20:FF:000593">
    <property type="entry name" value="Predicted protein"/>
    <property type="match status" value="1"/>
</dbReference>
<dbReference type="Gene3D" id="2.60.40.10">
    <property type="entry name" value="Immunoglobulins"/>
    <property type="match status" value="4"/>
</dbReference>
<dbReference type="Gene3D" id="3.30.200.20">
    <property type="entry name" value="Phosphorylase Kinase, domain 1"/>
    <property type="match status" value="1"/>
</dbReference>
<dbReference type="Gene3D" id="1.10.510.10">
    <property type="entry name" value="Transferase(Phosphotransferase) domain 1"/>
    <property type="match status" value="1"/>
</dbReference>
<dbReference type="InterPro" id="IPR003961">
    <property type="entry name" value="FN3_dom"/>
</dbReference>
<dbReference type="InterPro" id="IPR036116">
    <property type="entry name" value="FN3_sf"/>
</dbReference>
<dbReference type="InterPro" id="IPR007110">
    <property type="entry name" value="Ig-like_dom"/>
</dbReference>
<dbReference type="InterPro" id="IPR036179">
    <property type="entry name" value="Ig-like_dom_sf"/>
</dbReference>
<dbReference type="InterPro" id="IPR013783">
    <property type="entry name" value="Ig-like_fold"/>
</dbReference>
<dbReference type="InterPro" id="IPR013098">
    <property type="entry name" value="Ig_I-set"/>
</dbReference>
<dbReference type="InterPro" id="IPR003599">
    <property type="entry name" value="Ig_sub"/>
</dbReference>
<dbReference type="InterPro" id="IPR003598">
    <property type="entry name" value="Ig_sub2"/>
</dbReference>
<dbReference type="InterPro" id="IPR011009">
    <property type="entry name" value="Kinase-like_dom_sf"/>
</dbReference>
<dbReference type="InterPro" id="IPR000719">
    <property type="entry name" value="Prot_kinase_dom"/>
</dbReference>
<dbReference type="InterPro" id="IPR017441">
    <property type="entry name" value="Protein_kinase_ATP_BS"/>
</dbReference>
<dbReference type="InterPro" id="IPR050122">
    <property type="entry name" value="RTK"/>
</dbReference>
<dbReference type="InterPro" id="IPR001245">
    <property type="entry name" value="Ser-Thr/Tyr_kinase_cat_dom"/>
</dbReference>
<dbReference type="InterPro" id="IPR008266">
    <property type="entry name" value="Tyr_kinase_AS"/>
</dbReference>
<dbReference type="InterPro" id="IPR020635">
    <property type="entry name" value="Tyr_kinase_cat_dom"/>
</dbReference>
<dbReference type="PANTHER" id="PTHR24416:SF550">
    <property type="entry name" value="FIBROBLAST GROWTH FACTOR RECEPTOR HOMOLOG 1-RELATED"/>
    <property type="match status" value="1"/>
</dbReference>
<dbReference type="PANTHER" id="PTHR24416">
    <property type="entry name" value="TYROSINE-PROTEIN KINASE RECEPTOR"/>
    <property type="match status" value="1"/>
</dbReference>
<dbReference type="Pfam" id="PF00041">
    <property type="entry name" value="fn3"/>
    <property type="match status" value="1"/>
</dbReference>
<dbReference type="Pfam" id="PF07679">
    <property type="entry name" value="I-set"/>
    <property type="match status" value="1"/>
</dbReference>
<dbReference type="Pfam" id="PF13927">
    <property type="entry name" value="Ig_3"/>
    <property type="match status" value="1"/>
</dbReference>
<dbReference type="Pfam" id="PF07714">
    <property type="entry name" value="PK_Tyr_Ser-Thr"/>
    <property type="match status" value="1"/>
</dbReference>
<dbReference type="PRINTS" id="PR00109">
    <property type="entry name" value="TYRKINASE"/>
</dbReference>
<dbReference type="SMART" id="SM00060">
    <property type="entry name" value="FN3"/>
    <property type="match status" value="1"/>
</dbReference>
<dbReference type="SMART" id="SM00409">
    <property type="entry name" value="IG"/>
    <property type="match status" value="3"/>
</dbReference>
<dbReference type="SMART" id="SM00408">
    <property type="entry name" value="IGc2"/>
    <property type="match status" value="3"/>
</dbReference>
<dbReference type="SMART" id="SM00219">
    <property type="entry name" value="TyrKc"/>
    <property type="match status" value="1"/>
</dbReference>
<dbReference type="SUPFAM" id="SSF49265">
    <property type="entry name" value="Fibronectin type III"/>
    <property type="match status" value="1"/>
</dbReference>
<dbReference type="SUPFAM" id="SSF48726">
    <property type="entry name" value="Immunoglobulin"/>
    <property type="match status" value="3"/>
</dbReference>
<dbReference type="SUPFAM" id="SSF56112">
    <property type="entry name" value="Protein kinase-like (PK-like)"/>
    <property type="match status" value="1"/>
</dbReference>
<dbReference type="PROSITE" id="PS50853">
    <property type="entry name" value="FN3"/>
    <property type="match status" value="1"/>
</dbReference>
<dbReference type="PROSITE" id="PS50835">
    <property type="entry name" value="IG_LIKE"/>
    <property type="match status" value="3"/>
</dbReference>
<dbReference type="PROSITE" id="PS00107">
    <property type="entry name" value="PROTEIN_KINASE_ATP"/>
    <property type="match status" value="1"/>
</dbReference>
<dbReference type="PROSITE" id="PS50011">
    <property type="entry name" value="PROTEIN_KINASE_DOM"/>
    <property type="match status" value="1"/>
</dbReference>
<dbReference type="PROSITE" id="PS00109">
    <property type="entry name" value="PROTEIN_KINASE_TYR"/>
    <property type="match status" value="1"/>
</dbReference>